<evidence type="ECO:0000255" key="1">
    <source>
        <dbReference type="HAMAP-Rule" id="MF_00020"/>
    </source>
</evidence>
<feature type="chain" id="PRO_0000107609" description="Acetate kinase">
    <location>
        <begin position="1"/>
        <end position="399"/>
    </location>
</feature>
<feature type="active site" description="Proton donor/acceptor" evidence="1">
    <location>
        <position position="148"/>
    </location>
</feature>
<feature type="binding site" evidence="1">
    <location>
        <position position="10"/>
    </location>
    <ligand>
        <name>Mg(2+)</name>
        <dbReference type="ChEBI" id="CHEBI:18420"/>
    </ligand>
</feature>
<feature type="binding site" evidence="1">
    <location>
        <position position="17"/>
    </location>
    <ligand>
        <name>ATP</name>
        <dbReference type="ChEBI" id="CHEBI:30616"/>
    </ligand>
</feature>
<feature type="binding site" evidence="1">
    <location>
        <position position="91"/>
    </location>
    <ligand>
        <name>substrate</name>
    </ligand>
</feature>
<feature type="binding site" evidence="1">
    <location>
        <begin position="208"/>
        <end position="212"/>
    </location>
    <ligand>
        <name>ATP</name>
        <dbReference type="ChEBI" id="CHEBI:30616"/>
    </ligand>
</feature>
<feature type="binding site" evidence="1">
    <location>
        <begin position="283"/>
        <end position="285"/>
    </location>
    <ligand>
        <name>ATP</name>
        <dbReference type="ChEBI" id="CHEBI:30616"/>
    </ligand>
</feature>
<feature type="binding site" evidence="1">
    <location>
        <begin position="331"/>
        <end position="335"/>
    </location>
    <ligand>
        <name>ATP</name>
        <dbReference type="ChEBI" id="CHEBI:30616"/>
    </ligand>
</feature>
<feature type="binding site" evidence="1">
    <location>
        <position position="385"/>
    </location>
    <ligand>
        <name>Mg(2+)</name>
        <dbReference type="ChEBI" id="CHEBI:18420"/>
    </ligand>
</feature>
<feature type="site" description="Transition state stabilizer" evidence="1">
    <location>
        <position position="180"/>
    </location>
</feature>
<feature type="site" description="Transition state stabilizer" evidence="1">
    <location>
        <position position="241"/>
    </location>
</feature>
<dbReference type="EC" id="2.7.2.1" evidence="1"/>
<dbReference type="EMBL" id="AE014299">
    <property type="protein sequence ID" value="AAN55929.1"/>
    <property type="molecule type" value="Genomic_DNA"/>
</dbReference>
<dbReference type="RefSeq" id="NP_718485.1">
    <property type="nucleotide sequence ID" value="NC_004347.2"/>
</dbReference>
<dbReference type="RefSeq" id="WP_011072820.1">
    <property type="nucleotide sequence ID" value="NC_004347.2"/>
</dbReference>
<dbReference type="SMR" id="Q8ED55"/>
<dbReference type="STRING" id="211586.SO_2915"/>
<dbReference type="PaxDb" id="211586-SO_2915"/>
<dbReference type="KEGG" id="son:SO_2915"/>
<dbReference type="PATRIC" id="fig|211586.12.peg.2813"/>
<dbReference type="eggNOG" id="COG0282">
    <property type="taxonomic scope" value="Bacteria"/>
</dbReference>
<dbReference type="HOGENOM" id="CLU_020352_0_1_6"/>
<dbReference type="OrthoDB" id="9802453at2"/>
<dbReference type="PhylomeDB" id="Q8ED55"/>
<dbReference type="BioCyc" id="SONE211586:G1GMP-2689-MONOMER"/>
<dbReference type="UniPathway" id="UPA00340">
    <property type="reaction ID" value="UER00458"/>
</dbReference>
<dbReference type="Proteomes" id="UP000008186">
    <property type="component" value="Chromosome"/>
</dbReference>
<dbReference type="GO" id="GO:0005829">
    <property type="term" value="C:cytosol"/>
    <property type="evidence" value="ECO:0000318"/>
    <property type="project" value="GO_Central"/>
</dbReference>
<dbReference type="GO" id="GO:0008776">
    <property type="term" value="F:acetate kinase activity"/>
    <property type="evidence" value="ECO:0000318"/>
    <property type="project" value="GO_Central"/>
</dbReference>
<dbReference type="GO" id="GO:0005524">
    <property type="term" value="F:ATP binding"/>
    <property type="evidence" value="ECO:0007669"/>
    <property type="project" value="UniProtKB-KW"/>
</dbReference>
<dbReference type="GO" id="GO:0000287">
    <property type="term" value="F:magnesium ion binding"/>
    <property type="evidence" value="ECO:0007669"/>
    <property type="project" value="UniProtKB-UniRule"/>
</dbReference>
<dbReference type="GO" id="GO:0006083">
    <property type="term" value="P:acetate metabolic process"/>
    <property type="evidence" value="ECO:0000318"/>
    <property type="project" value="GO_Central"/>
</dbReference>
<dbReference type="GO" id="GO:0006085">
    <property type="term" value="P:acetyl-CoA biosynthetic process"/>
    <property type="evidence" value="ECO:0007669"/>
    <property type="project" value="UniProtKB-UniRule"/>
</dbReference>
<dbReference type="CDD" id="cd24010">
    <property type="entry name" value="ASKHA_NBD_AcK_PK"/>
    <property type="match status" value="1"/>
</dbReference>
<dbReference type="FunFam" id="3.30.420.40:FF:000041">
    <property type="entry name" value="Acetate kinase"/>
    <property type="match status" value="1"/>
</dbReference>
<dbReference type="Gene3D" id="3.30.420.40">
    <property type="match status" value="2"/>
</dbReference>
<dbReference type="HAMAP" id="MF_00020">
    <property type="entry name" value="Acetate_kinase"/>
    <property type="match status" value="1"/>
</dbReference>
<dbReference type="InterPro" id="IPR004372">
    <property type="entry name" value="Ac/propionate_kinase"/>
</dbReference>
<dbReference type="InterPro" id="IPR000890">
    <property type="entry name" value="Aliphatic_acid_kin_short-chain"/>
</dbReference>
<dbReference type="InterPro" id="IPR023865">
    <property type="entry name" value="Aliphatic_acid_kinase_CS"/>
</dbReference>
<dbReference type="InterPro" id="IPR043129">
    <property type="entry name" value="ATPase_NBD"/>
</dbReference>
<dbReference type="NCBIfam" id="TIGR00016">
    <property type="entry name" value="ackA"/>
    <property type="match status" value="1"/>
</dbReference>
<dbReference type="PANTHER" id="PTHR21060">
    <property type="entry name" value="ACETATE KINASE"/>
    <property type="match status" value="1"/>
</dbReference>
<dbReference type="PANTHER" id="PTHR21060:SF21">
    <property type="entry name" value="ACETATE KINASE"/>
    <property type="match status" value="1"/>
</dbReference>
<dbReference type="Pfam" id="PF00871">
    <property type="entry name" value="Acetate_kinase"/>
    <property type="match status" value="1"/>
</dbReference>
<dbReference type="PIRSF" id="PIRSF000722">
    <property type="entry name" value="Acetate_prop_kin"/>
    <property type="match status" value="1"/>
</dbReference>
<dbReference type="PRINTS" id="PR00471">
    <property type="entry name" value="ACETATEKNASE"/>
</dbReference>
<dbReference type="SUPFAM" id="SSF53067">
    <property type="entry name" value="Actin-like ATPase domain"/>
    <property type="match status" value="2"/>
</dbReference>
<dbReference type="PROSITE" id="PS01075">
    <property type="entry name" value="ACETATE_KINASE_1"/>
    <property type="match status" value="1"/>
</dbReference>
<dbReference type="PROSITE" id="PS01076">
    <property type="entry name" value="ACETATE_KINASE_2"/>
    <property type="match status" value="1"/>
</dbReference>
<accession>Q8ED55</accession>
<reference key="1">
    <citation type="journal article" date="2002" name="Nat. Biotechnol.">
        <title>Genome sequence of the dissimilatory metal ion-reducing bacterium Shewanella oneidensis.</title>
        <authorList>
            <person name="Heidelberg J.F."/>
            <person name="Paulsen I.T."/>
            <person name="Nelson K.E."/>
            <person name="Gaidos E.J."/>
            <person name="Nelson W.C."/>
            <person name="Read T.D."/>
            <person name="Eisen J.A."/>
            <person name="Seshadri R."/>
            <person name="Ward N.L."/>
            <person name="Methe B.A."/>
            <person name="Clayton R.A."/>
            <person name="Meyer T."/>
            <person name="Tsapin A."/>
            <person name="Scott J."/>
            <person name="Beanan M.J."/>
            <person name="Brinkac L.M."/>
            <person name="Daugherty S.C."/>
            <person name="DeBoy R.T."/>
            <person name="Dodson R.J."/>
            <person name="Durkin A.S."/>
            <person name="Haft D.H."/>
            <person name="Kolonay J.F."/>
            <person name="Madupu R."/>
            <person name="Peterson J.D."/>
            <person name="Umayam L.A."/>
            <person name="White O."/>
            <person name="Wolf A.M."/>
            <person name="Vamathevan J.J."/>
            <person name="Weidman J.F."/>
            <person name="Impraim M."/>
            <person name="Lee K."/>
            <person name="Berry K.J."/>
            <person name="Lee C."/>
            <person name="Mueller J."/>
            <person name="Khouri H.M."/>
            <person name="Gill J."/>
            <person name="Utterback T.R."/>
            <person name="McDonald L.A."/>
            <person name="Feldblyum T.V."/>
            <person name="Smith H.O."/>
            <person name="Venter J.C."/>
            <person name="Nealson K.H."/>
            <person name="Fraser C.M."/>
        </authorList>
    </citation>
    <scope>NUCLEOTIDE SEQUENCE [LARGE SCALE GENOMIC DNA]</scope>
    <source>
        <strain>ATCC 700550 / JCM 31522 / CIP 106686 / LMG 19005 / NCIMB 14063 / MR-1</strain>
    </source>
</reference>
<name>ACKA_SHEON</name>
<proteinExistence type="inferred from homology"/>
<sequence>MSNKLVLVLNCGSSSLKFAVIDAQTGDDQISGLAECFGLEDSRIKWKINGEKHESSLGAFTAHREAVEFIVNKILAGQPELAAQIQAVGHRIVHGGEKFTRSVIIDEHVIKGIEECSSLAPLHNPAHLIGIRAAMASFPKLPQVAVFDTAFHQSMPERSFIYALPYKLYREHGIRRYGMHGTSHLFVSREAAKVLKKPLAETNVICAHLGNGASVTAVKGGKSVDTSMGLTPLEGLVMGTRCGDIDPSIIYHLVHQLGYTLEEVNNLMNKQSGLLGISELTNDCRGIEEGYADGHKGATLALEIFCYRLAKYIASYTVPLGRLDAVVFTGGIGENSDIIREKVLNMLQIFNFHVDSERNKAARFGKKGIITADNSTVAMVIPTNEEWVIAEDSIKLITK</sequence>
<organism>
    <name type="scientific">Shewanella oneidensis (strain ATCC 700550 / JCM 31522 / CIP 106686 / LMG 19005 / NCIMB 14063 / MR-1)</name>
    <dbReference type="NCBI Taxonomy" id="211586"/>
    <lineage>
        <taxon>Bacteria</taxon>
        <taxon>Pseudomonadati</taxon>
        <taxon>Pseudomonadota</taxon>
        <taxon>Gammaproteobacteria</taxon>
        <taxon>Alteromonadales</taxon>
        <taxon>Shewanellaceae</taxon>
        <taxon>Shewanella</taxon>
    </lineage>
</organism>
<keyword id="KW-0067">ATP-binding</keyword>
<keyword id="KW-0963">Cytoplasm</keyword>
<keyword id="KW-0418">Kinase</keyword>
<keyword id="KW-0460">Magnesium</keyword>
<keyword id="KW-0479">Metal-binding</keyword>
<keyword id="KW-0547">Nucleotide-binding</keyword>
<keyword id="KW-1185">Reference proteome</keyword>
<keyword id="KW-0808">Transferase</keyword>
<protein>
    <recommendedName>
        <fullName evidence="1">Acetate kinase</fullName>
        <ecNumber evidence="1">2.7.2.1</ecNumber>
    </recommendedName>
    <alternativeName>
        <fullName evidence="1">Acetokinase</fullName>
    </alternativeName>
</protein>
<comment type="function">
    <text evidence="1">Catalyzes the formation of acetyl phosphate from acetate and ATP. Can also catalyze the reverse reaction.</text>
</comment>
<comment type="catalytic activity">
    <reaction evidence="1">
        <text>acetate + ATP = acetyl phosphate + ADP</text>
        <dbReference type="Rhea" id="RHEA:11352"/>
        <dbReference type="ChEBI" id="CHEBI:22191"/>
        <dbReference type="ChEBI" id="CHEBI:30089"/>
        <dbReference type="ChEBI" id="CHEBI:30616"/>
        <dbReference type="ChEBI" id="CHEBI:456216"/>
        <dbReference type="EC" id="2.7.2.1"/>
    </reaction>
</comment>
<comment type="cofactor">
    <cofactor evidence="1">
        <name>Mg(2+)</name>
        <dbReference type="ChEBI" id="CHEBI:18420"/>
    </cofactor>
    <cofactor evidence="1">
        <name>Mn(2+)</name>
        <dbReference type="ChEBI" id="CHEBI:29035"/>
    </cofactor>
    <text evidence="1">Mg(2+). Can also accept Mn(2+).</text>
</comment>
<comment type="pathway">
    <text evidence="1">Metabolic intermediate biosynthesis; acetyl-CoA biosynthesis; acetyl-CoA from acetate: step 1/2.</text>
</comment>
<comment type="subunit">
    <text evidence="1">Homodimer.</text>
</comment>
<comment type="subcellular location">
    <subcellularLocation>
        <location evidence="1">Cytoplasm</location>
    </subcellularLocation>
</comment>
<comment type="similarity">
    <text evidence="1">Belongs to the acetokinase family.</text>
</comment>
<gene>
    <name evidence="1" type="primary">ackA</name>
    <name type="ordered locus">SO_2915</name>
</gene>